<proteinExistence type="inferred from homology"/>
<name>TORR_ECO57</name>
<sequence length="230" mass="26269">MPHHIVIVEDEPVTQARLQSYFTQEGYTVSVTASGAGLREIMQNQPVDLILLDINLPDENGLMLTRALRERSTVGIILVTGRSDRIDRIVGLEMGADDYVTKPLELRELVVRVKNLLWRIDLARQAQPYTQDNCYRFAGYCLNVSRHTLERDGEPIKLTRAEYEMLVAFVTNPGEILSRERLLRMLSARRVENPDLRTVDVLIRRLRHKLSADLLVTQHGEGYFLAADVC</sequence>
<feature type="chain" id="PRO_0000081256" description="TorCAD operon transcriptional regulatory protein TorR">
    <location>
        <begin position="1"/>
        <end position="230"/>
    </location>
</feature>
<feature type="domain" description="Response regulatory" evidence="2">
    <location>
        <begin position="4"/>
        <end position="117"/>
    </location>
</feature>
<feature type="DNA-binding region" description="OmpR/PhoB-type" evidence="3">
    <location>
        <begin position="132"/>
        <end position="227"/>
    </location>
</feature>
<feature type="modified residue" description="4-aspartylphosphate" evidence="2">
    <location>
        <position position="53"/>
    </location>
</feature>
<comment type="function">
    <text evidence="1">Member of the two-component regulatory system TorS/TorR involved in the anaerobic utilization of trimethylamine-N-oxide (TMAO). Phosphorylated TorR activates the transcription of the torCAD operon by binding to four decameric boxes located in the torCAD promoter. Box1, 2 and 4 contain the DNA sequence 5'-CTGTTCATAT-3' and box3 contains the DNA sequence 5'-CCGTTCATCC-3'. Phosphorylated as well as unphosphorylated TorR negatively regulates its own expression by binding to box1 and 2 (By similarity).</text>
</comment>
<comment type="subcellular location">
    <subcellularLocation>
        <location evidence="4">Cytoplasm</location>
    </subcellularLocation>
</comment>
<comment type="PTM">
    <text evidence="1">Phosphorylated and dephosphorylated by TorS.</text>
</comment>
<evidence type="ECO:0000250" key="1"/>
<evidence type="ECO:0000255" key="2">
    <source>
        <dbReference type="PROSITE-ProRule" id="PRU00169"/>
    </source>
</evidence>
<evidence type="ECO:0000255" key="3">
    <source>
        <dbReference type="PROSITE-ProRule" id="PRU01091"/>
    </source>
</evidence>
<evidence type="ECO:0000305" key="4"/>
<protein>
    <recommendedName>
        <fullName>TorCAD operon transcriptional regulatory protein TorR</fullName>
    </recommendedName>
</protein>
<reference key="1">
    <citation type="journal article" date="2001" name="Nature">
        <title>Genome sequence of enterohaemorrhagic Escherichia coli O157:H7.</title>
        <authorList>
            <person name="Perna N.T."/>
            <person name="Plunkett G. III"/>
            <person name="Burland V."/>
            <person name="Mau B."/>
            <person name="Glasner J.D."/>
            <person name="Rose D.J."/>
            <person name="Mayhew G.F."/>
            <person name="Evans P.S."/>
            <person name="Gregor J."/>
            <person name="Kirkpatrick H.A."/>
            <person name="Posfai G."/>
            <person name="Hackett J."/>
            <person name="Klink S."/>
            <person name="Boutin A."/>
            <person name="Shao Y."/>
            <person name="Miller L."/>
            <person name="Grotbeck E.J."/>
            <person name="Davis N.W."/>
            <person name="Lim A."/>
            <person name="Dimalanta E.T."/>
            <person name="Potamousis K."/>
            <person name="Apodaca J."/>
            <person name="Anantharaman T.S."/>
            <person name="Lin J."/>
            <person name="Yen G."/>
            <person name="Schwartz D.C."/>
            <person name="Welch R.A."/>
            <person name="Blattner F.R."/>
        </authorList>
    </citation>
    <scope>NUCLEOTIDE SEQUENCE [LARGE SCALE GENOMIC DNA]</scope>
    <source>
        <strain>O157:H7 / EDL933 / ATCC 700927 / EHEC</strain>
    </source>
</reference>
<reference key="2">
    <citation type="journal article" date="2001" name="DNA Res.">
        <title>Complete genome sequence of enterohemorrhagic Escherichia coli O157:H7 and genomic comparison with a laboratory strain K-12.</title>
        <authorList>
            <person name="Hayashi T."/>
            <person name="Makino K."/>
            <person name="Ohnishi M."/>
            <person name="Kurokawa K."/>
            <person name="Ishii K."/>
            <person name="Yokoyama K."/>
            <person name="Han C.-G."/>
            <person name="Ohtsubo E."/>
            <person name="Nakayama K."/>
            <person name="Murata T."/>
            <person name="Tanaka M."/>
            <person name="Tobe T."/>
            <person name="Iida T."/>
            <person name="Takami H."/>
            <person name="Honda T."/>
            <person name="Sasakawa C."/>
            <person name="Ogasawara N."/>
            <person name="Yasunaga T."/>
            <person name="Kuhara S."/>
            <person name="Shiba T."/>
            <person name="Hattori M."/>
            <person name="Shinagawa H."/>
        </authorList>
    </citation>
    <scope>NUCLEOTIDE SEQUENCE [LARGE SCALE GENOMIC DNA]</scope>
    <source>
        <strain>O157:H7 / Sakai / RIMD 0509952 / EHEC</strain>
    </source>
</reference>
<organism>
    <name type="scientific">Escherichia coli O157:H7</name>
    <dbReference type="NCBI Taxonomy" id="83334"/>
    <lineage>
        <taxon>Bacteria</taxon>
        <taxon>Pseudomonadati</taxon>
        <taxon>Pseudomonadota</taxon>
        <taxon>Gammaproteobacteria</taxon>
        <taxon>Enterobacterales</taxon>
        <taxon>Enterobacteriaceae</taxon>
        <taxon>Escherichia</taxon>
    </lineage>
</organism>
<accession>P58357</accession>
<dbReference type="EMBL" id="AE005174">
    <property type="protein sequence ID" value="AAG55542.1"/>
    <property type="molecule type" value="Genomic_DNA"/>
</dbReference>
<dbReference type="EMBL" id="BA000007">
    <property type="protein sequence ID" value="BAB34573.1"/>
    <property type="molecule type" value="Genomic_DNA"/>
</dbReference>
<dbReference type="PIR" id="B85635">
    <property type="entry name" value="B85635"/>
</dbReference>
<dbReference type="PIR" id="F90772">
    <property type="entry name" value="F90772"/>
</dbReference>
<dbReference type="RefSeq" id="NP_309177.1">
    <property type="nucleotide sequence ID" value="NC_002695.1"/>
</dbReference>
<dbReference type="RefSeq" id="WP_001120119.1">
    <property type="nucleotide sequence ID" value="NZ_VOAI01000025.1"/>
</dbReference>
<dbReference type="SMR" id="P58357"/>
<dbReference type="STRING" id="155864.Z1412"/>
<dbReference type="GeneID" id="75171071"/>
<dbReference type="GeneID" id="914140"/>
<dbReference type="KEGG" id="ece:Z1412"/>
<dbReference type="KEGG" id="ecs:ECs_1150"/>
<dbReference type="PATRIC" id="fig|386585.9.peg.1266"/>
<dbReference type="eggNOG" id="COG0745">
    <property type="taxonomic scope" value="Bacteria"/>
</dbReference>
<dbReference type="HOGENOM" id="CLU_000445_30_4_6"/>
<dbReference type="OMA" id="HTDPFTN"/>
<dbReference type="Proteomes" id="UP000000558">
    <property type="component" value="Chromosome"/>
</dbReference>
<dbReference type="Proteomes" id="UP000002519">
    <property type="component" value="Chromosome"/>
</dbReference>
<dbReference type="GO" id="GO:0005829">
    <property type="term" value="C:cytosol"/>
    <property type="evidence" value="ECO:0007669"/>
    <property type="project" value="TreeGrafter"/>
</dbReference>
<dbReference type="GO" id="GO:0032993">
    <property type="term" value="C:protein-DNA complex"/>
    <property type="evidence" value="ECO:0007669"/>
    <property type="project" value="TreeGrafter"/>
</dbReference>
<dbReference type="GO" id="GO:0000156">
    <property type="term" value="F:phosphorelay response regulator activity"/>
    <property type="evidence" value="ECO:0007669"/>
    <property type="project" value="TreeGrafter"/>
</dbReference>
<dbReference type="GO" id="GO:0000976">
    <property type="term" value="F:transcription cis-regulatory region binding"/>
    <property type="evidence" value="ECO:0007669"/>
    <property type="project" value="TreeGrafter"/>
</dbReference>
<dbReference type="GO" id="GO:0006355">
    <property type="term" value="P:regulation of DNA-templated transcription"/>
    <property type="evidence" value="ECO:0007669"/>
    <property type="project" value="InterPro"/>
</dbReference>
<dbReference type="CDD" id="cd17619">
    <property type="entry name" value="REC_OmpR_ArcA_TorR-like"/>
    <property type="match status" value="1"/>
</dbReference>
<dbReference type="CDD" id="cd00383">
    <property type="entry name" value="trans_reg_C"/>
    <property type="match status" value="1"/>
</dbReference>
<dbReference type="FunFam" id="3.40.50.2300:FF:000006">
    <property type="entry name" value="Two-component system response regulator ArcA"/>
    <property type="match status" value="1"/>
</dbReference>
<dbReference type="FunFam" id="1.10.10.10:FF:000099">
    <property type="entry name" value="Two-component system response regulator TorR"/>
    <property type="match status" value="1"/>
</dbReference>
<dbReference type="Gene3D" id="3.40.50.2300">
    <property type="match status" value="1"/>
</dbReference>
<dbReference type="Gene3D" id="6.10.250.690">
    <property type="match status" value="1"/>
</dbReference>
<dbReference type="Gene3D" id="1.10.10.10">
    <property type="entry name" value="Winged helix-like DNA-binding domain superfamily/Winged helix DNA-binding domain"/>
    <property type="match status" value="1"/>
</dbReference>
<dbReference type="InterPro" id="IPR011006">
    <property type="entry name" value="CheY-like_superfamily"/>
</dbReference>
<dbReference type="InterPro" id="IPR001867">
    <property type="entry name" value="OmpR/PhoB-type_DNA-bd"/>
</dbReference>
<dbReference type="InterPro" id="IPR001789">
    <property type="entry name" value="Sig_transdc_resp-reg_receiver"/>
</dbReference>
<dbReference type="InterPro" id="IPR039420">
    <property type="entry name" value="WalR-like"/>
</dbReference>
<dbReference type="InterPro" id="IPR036388">
    <property type="entry name" value="WH-like_DNA-bd_sf"/>
</dbReference>
<dbReference type="NCBIfam" id="NF008034">
    <property type="entry name" value="PRK10766.1"/>
    <property type="match status" value="1"/>
</dbReference>
<dbReference type="PANTHER" id="PTHR48111">
    <property type="entry name" value="REGULATOR OF RPOS"/>
    <property type="match status" value="1"/>
</dbReference>
<dbReference type="PANTHER" id="PTHR48111:SF58">
    <property type="entry name" value="TORCAD OPERON TRANSCRIPTIONAL REGULATORY PROTEIN TORR"/>
    <property type="match status" value="1"/>
</dbReference>
<dbReference type="Pfam" id="PF00072">
    <property type="entry name" value="Response_reg"/>
    <property type="match status" value="1"/>
</dbReference>
<dbReference type="Pfam" id="PF00486">
    <property type="entry name" value="Trans_reg_C"/>
    <property type="match status" value="1"/>
</dbReference>
<dbReference type="SMART" id="SM00448">
    <property type="entry name" value="REC"/>
    <property type="match status" value="1"/>
</dbReference>
<dbReference type="SMART" id="SM00862">
    <property type="entry name" value="Trans_reg_C"/>
    <property type="match status" value="1"/>
</dbReference>
<dbReference type="SUPFAM" id="SSF52172">
    <property type="entry name" value="CheY-like"/>
    <property type="match status" value="1"/>
</dbReference>
<dbReference type="PROSITE" id="PS51755">
    <property type="entry name" value="OMPR_PHOB"/>
    <property type="match status" value="1"/>
</dbReference>
<dbReference type="PROSITE" id="PS50110">
    <property type="entry name" value="RESPONSE_REGULATORY"/>
    <property type="match status" value="1"/>
</dbReference>
<keyword id="KW-0010">Activator</keyword>
<keyword id="KW-0963">Cytoplasm</keyword>
<keyword id="KW-0238">DNA-binding</keyword>
<keyword id="KW-0597">Phosphoprotein</keyword>
<keyword id="KW-1185">Reference proteome</keyword>
<keyword id="KW-0804">Transcription</keyword>
<keyword id="KW-0805">Transcription regulation</keyword>
<keyword id="KW-0902">Two-component regulatory system</keyword>
<gene>
    <name type="primary">torR</name>
    <name type="ordered locus">Z1412</name>
    <name type="ordered locus">ECs1150</name>
</gene>